<sequence length="238" mass="25930">MSSSTANVDPAELAKFSELAHRWWDLESEFRPLHEINPLRLGWIDGLAPLQGRRVLDVGCGGGILADAMARKGATVTGIDLATKSLKVAQLHALEAGTPDIQYREVSVEALAEESPASFDTVTCMEMLEHVPDPASVVQACARLVKPGGWVFFSTINRNAKAFLLAIVGAEYVLGMLPRGTHEYAKLIKPSELATACRSARLDVLQTRGMEYNPLTRRYALSGDTSVNYLMACRRAEA</sequence>
<gene>
    <name evidence="1" type="primary">ubiG</name>
    <name type="ordered locus">Aave_3278</name>
</gene>
<accession>A1TSA0</accession>
<comment type="function">
    <text evidence="1">O-methyltransferase that catalyzes the 2 O-methylation steps in the ubiquinone biosynthetic pathway.</text>
</comment>
<comment type="catalytic activity">
    <reaction evidence="1">
        <text>a 3-demethylubiquinol + S-adenosyl-L-methionine = a ubiquinol + S-adenosyl-L-homocysteine + H(+)</text>
        <dbReference type="Rhea" id="RHEA:44380"/>
        <dbReference type="Rhea" id="RHEA-COMP:9566"/>
        <dbReference type="Rhea" id="RHEA-COMP:10914"/>
        <dbReference type="ChEBI" id="CHEBI:15378"/>
        <dbReference type="ChEBI" id="CHEBI:17976"/>
        <dbReference type="ChEBI" id="CHEBI:57856"/>
        <dbReference type="ChEBI" id="CHEBI:59789"/>
        <dbReference type="ChEBI" id="CHEBI:84422"/>
        <dbReference type="EC" id="2.1.1.64"/>
    </reaction>
</comment>
<comment type="catalytic activity">
    <reaction evidence="1">
        <text>a 3-(all-trans-polyprenyl)benzene-1,2-diol + S-adenosyl-L-methionine = a 2-methoxy-6-(all-trans-polyprenyl)phenol + S-adenosyl-L-homocysteine + H(+)</text>
        <dbReference type="Rhea" id="RHEA:31411"/>
        <dbReference type="Rhea" id="RHEA-COMP:9550"/>
        <dbReference type="Rhea" id="RHEA-COMP:9551"/>
        <dbReference type="ChEBI" id="CHEBI:15378"/>
        <dbReference type="ChEBI" id="CHEBI:57856"/>
        <dbReference type="ChEBI" id="CHEBI:59789"/>
        <dbReference type="ChEBI" id="CHEBI:62729"/>
        <dbReference type="ChEBI" id="CHEBI:62731"/>
        <dbReference type="EC" id="2.1.1.222"/>
    </reaction>
</comment>
<comment type="pathway">
    <text evidence="1">Cofactor biosynthesis; ubiquinone biosynthesis.</text>
</comment>
<comment type="similarity">
    <text evidence="1">Belongs to the methyltransferase superfamily. UbiG/COQ3 family.</text>
</comment>
<reference key="1">
    <citation type="submission" date="2006-12" db="EMBL/GenBank/DDBJ databases">
        <title>Complete sequence of Acidovorax avenae subsp. citrulli AAC00-1.</title>
        <authorList>
            <person name="Copeland A."/>
            <person name="Lucas S."/>
            <person name="Lapidus A."/>
            <person name="Barry K."/>
            <person name="Detter J.C."/>
            <person name="Glavina del Rio T."/>
            <person name="Dalin E."/>
            <person name="Tice H."/>
            <person name="Pitluck S."/>
            <person name="Kiss H."/>
            <person name="Brettin T."/>
            <person name="Bruce D."/>
            <person name="Han C."/>
            <person name="Tapia R."/>
            <person name="Gilna P."/>
            <person name="Schmutz J."/>
            <person name="Larimer F."/>
            <person name="Land M."/>
            <person name="Hauser L."/>
            <person name="Kyrpides N."/>
            <person name="Kim E."/>
            <person name="Stahl D."/>
            <person name="Richardson P."/>
        </authorList>
    </citation>
    <scope>NUCLEOTIDE SEQUENCE [LARGE SCALE GENOMIC DNA]</scope>
    <source>
        <strain>AAC00-1</strain>
    </source>
</reference>
<keyword id="KW-0489">Methyltransferase</keyword>
<keyword id="KW-0949">S-adenosyl-L-methionine</keyword>
<keyword id="KW-0808">Transferase</keyword>
<keyword id="KW-0831">Ubiquinone biosynthesis</keyword>
<evidence type="ECO:0000255" key="1">
    <source>
        <dbReference type="HAMAP-Rule" id="MF_00472"/>
    </source>
</evidence>
<organism>
    <name type="scientific">Paracidovorax citrulli (strain AAC00-1)</name>
    <name type="common">Acidovorax citrulli</name>
    <dbReference type="NCBI Taxonomy" id="397945"/>
    <lineage>
        <taxon>Bacteria</taxon>
        <taxon>Pseudomonadati</taxon>
        <taxon>Pseudomonadota</taxon>
        <taxon>Betaproteobacteria</taxon>
        <taxon>Burkholderiales</taxon>
        <taxon>Comamonadaceae</taxon>
        <taxon>Paracidovorax</taxon>
    </lineage>
</organism>
<dbReference type="EC" id="2.1.1.222" evidence="1"/>
<dbReference type="EC" id="2.1.1.64" evidence="1"/>
<dbReference type="EMBL" id="CP000512">
    <property type="protein sequence ID" value="ABM33838.1"/>
    <property type="molecule type" value="Genomic_DNA"/>
</dbReference>
<dbReference type="RefSeq" id="WP_011796343.1">
    <property type="nucleotide sequence ID" value="NC_008752.1"/>
</dbReference>
<dbReference type="SMR" id="A1TSA0"/>
<dbReference type="STRING" id="397945.Aave_3278"/>
<dbReference type="GeneID" id="79792967"/>
<dbReference type="KEGG" id="aav:Aave_3278"/>
<dbReference type="eggNOG" id="COG2227">
    <property type="taxonomic scope" value="Bacteria"/>
</dbReference>
<dbReference type="HOGENOM" id="CLU_042432_5_0_4"/>
<dbReference type="OrthoDB" id="9801538at2"/>
<dbReference type="UniPathway" id="UPA00232"/>
<dbReference type="Proteomes" id="UP000002596">
    <property type="component" value="Chromosome"/>
</dbReference>
<dbReference type="GO" id="GO:0102208">
    <property type="term" value="F:2-polyprenyl-6-hydroxyphenol methylase activity"/>
    <property type="evidence" value="ECO:0007669"/>
    <property type="project" value="UniProtKB-EC"/>
</dbReference>
<dbReference type="GO" id="GO:0061542">
    <property type="term" value="F:3-demethylubiquinol 3-O-methyltransferase activity"/>
    <property type="evidence" value="ECO:0007669"/>
    <property type="project" value="UniProtKB-UniRule"/>
</dbReference>
<dbReference type="GO" id="GO:0010420">
    <property type="term" value="F:polyprenyldihydroxybenzoate methyltransferase activity"/>
    <property type="evidence" value="ECO:0007669"/>
    <property type="project" value="InterPro"/>
</dbReference>
<dbReference type="GO" id="GO:0032259">
    <property type="term" value="P:methylation"/>
    <property type="evidence" value="ECO:0007669"/>
    <property type="project" value="UniProtKB-KW"/>
</dbReference>
<dbReference type="CDD" id="cd02440">
    <property type="entry name" value="AdoMet_MTases"/>
    <property type="match status" value="1"/>
</dbReference>
<dbReference type="FunFam" id="3.40.50.150:FF:000028">
    <property type="entry name" value="Ubiquinone biosynthesis O-methyltransferase"/>
    <property type="match status" value="1"/>
</dbReference>
<dbReference type="Gene3D" id="3.40.50.150">
    <property type="entry name" value="Vaccinia Virus protein VP39"/>
    <property type="match status" value="1"/>
</dbReference>
<dbReference type="HAMAP" id="MF_00472">
    <property type="entry name" value="UbiG"/>
    <property type="match status" value="1"/>
</dbReference>
<dbReference type="InterPro" id="IPR029063">
    <property type="entry name" value="SAM-dependent_MTases_sf"/>
</dbReference>
<dbReference type="InterPro" id="IPR010233">
    <property type="entry name" value="UbiG_MeTrfase"/>
</dbReference>
<dbReference type="NCBIfam" id="TIGR01983">
    <property type="entry name" value="UbiG"/>
    <property type="match status" value="1"/>
</dbReference>
<dbReference type="PANTHER" id="PTHR43464">
    <property type="entry name" value="METHYLTRANSFERASE"/>
    <property type="match status" value="1"/>
</dbReference>
<dbReference type="PANTHER" id="PTHR43464:SF19">
    <property type="entry name" value="UBIQUINONE BIOSYNTHESIS O-METHYLTRANSFERASE, MITOCHONDRIAL"/>
    <property type="match status" value="1"/>
</dbReference>
<dbReference type="Pfam" id="PF13489">
    <property type="entry name" value="Methyltransf_23"/>
    <property type="match status" value="1"/>
</dbReference>
<dbReference type="SUPFAM" id="SSF53335">
    <property type="entry name" value="S-adenosyl-L-methionine-dependent methyltransferases"/>
    <property type="match status" value="1"/>
</dbReference>
<proteinExistence type="inferred from homology"/>
<name>UBIG_PARC0</name>
<protein>
    <recommendedName>
        <fullName evidence="1">Ubiquinone biosynthesis O-methyltransferase</fullName>
    </recommendedName>
    <alternativeName>
        <fullName evidence="1">2-polyprenyl-6-hydroxyphenol methylase</fullName>
        <ecNumber evidence="1">2.1.1.222</ecNumber>
    </alternativeName>
    <alternativeName>
        <fullName evidence="1">3-demethylubiquinone 3-O-methyltransferase</fullName>
        <ecNumber evidence="1">2.1.1.64</ecNumber>
    </alternativeName>
</protein>
<feature type="chain" id="PRO_1000013885" description="Ubiquinone biosynthesis O-methyltransferase">
    <location>
        <begin position="1"/>
        <end position="238"/>
    </location>
</feature>
<feature type="binding site" evidence="1">
    <location>
        <position position="40"/>
    </location>
    <ligand>
        <name>S-adenosyl-L-methionine</name>
        <dbReference type="ChEBI" id="CHEBI:59789"/>
    </ligand>
</feature>
<feature type="binding site" evidence="1">
    <location>
        <position position="59"/>
    </location>
    <ligand>
        <name>S-adenosyl-L-methionine</name>
        <dbReference type="ChEBI" id="CHEBI:59789"/>
    </ligand>
</feature>
<feature type="binding site" evidence="1">
    <location>
        <position position="80"/>
    </location>
    <ligand>
        <name>S-adenosyl-L-methionine</name>
        <dbReference type="ChEBI" id="CHEBI:59789"/>
    </ligand>
</feature>
<feature type="binding site" evidence="1">
    <location>
        <position position="125"/>
    </location>
    <ligand>
        <name>S-adenosyl-L-methionine</name>
        <dbReference type="ChEBI" id="CHEBI:59789"/>
    </ligand>
</feature>